<gene>
    <name evidence="1" type="primary">flgI</name>
    <name type="ordered locus">AHA_2835</name>
</gene>
<keyword id="KW-0975">Bacterial flagellum</keyword>
<keyword id="KW-0574">Periplasm</keyword>
<keyword id="KW-1185">Reference proteome</keyword>
<keyword id="KW-0732">Signal</keyword>
<sequence>MKSLRLVALFCCLLPLGMAHASRIKDISSVEGVRSNQLIGYGLVVGLPGTGEKSNAFTEQTFRTMLNNFGIKVPDNIKPKIKDVAPVAIHADLPPFAKPGQTIDVTVSAIGEAKSLRGGTLLQSFLKGLDGRVYAVAQGSLVVGGLGAEGADGSKVVINTPTVGRIANGATVEREVPNSFSQGDTITFNLNRPDFTTARRLADVVNDLVGPNTAQALDATSVKVYAPRDPGQRVSYLATIENLEVDPASEAAKIIVNSRTGTIVIGSQVRLKPAAISHGGLTVTIAENQQVSQPNPLSGGQTAVTNNSTINVQQEQGRMFKLDTGATLDDLVRAVNQVGVAPGDLMAILEALQQAGAIEGQLVIL</sequence>
<comment type="function">
    <text evidence="1">Assembles around the rod to form the L-ring and probably protects the motor/basal body from shearing forces during rotation.</text>
</comment>
<comment type="subunit">
    <text evidence="1">The basal body constitutes a major portion of the flagellar organelle and consists of four rings (L,P,S, and M) mounted on a central rod.</text>
</comment>
<comment type="subcellular location">
    <subcellularLocation>
        <location evidence="1">Periplasm</location>
    </subcellularLocation>
    <subcellularLocation>
        <location evidence="1">Bacterial flagellum basal body</location>
    </subcellularLocation>
</comment>
<comment type="similarity">
    <text evidence="1">Belongs to the FlgI family.</text>
</comment>
<reference key="1">
    <citation type="journal article" date="2006" name="J. Bacteriol.">
        <title>Genome sequence of Aeromonas hydrophila ATCC 7966T: jack of all trades.</title>
        <authorList>
            <person name="Seshadri R."/>
            <person name="Joseph S.W."/>
            <person name="Chopra A.K."/>
            <person name="Sha J."/>
            <person name="Shaw J."/>
            <person name="Graf J."/>
            <person name="Haft D.H."/>
            <person name="Wu M."/>
            <person name="Ren Q."/>
            <person name="Rosovitz M.J."/>
            <person name="Madupu R."/>
            <person name="Tallon L."/>
            <person name="Kim M."/>
            <person name="Jin S."/>
            <person name="Vuong H."/>
            <person name="Stine O.C."/>
            <person name="Ali A."/>
            <person name="Horneman A.J."/>
            <person name="Heidelberg J.F."/>
        </authorList>
    </citation>
    <scope>NUCLEOTIDE SEQUENCE [LARGE SCALE GENOMIC DNA]</scope>
    <source>
        <strain>ATCC 7966 / DSM 30187 / BCRC 13018 / CCUG 14551 / JCM 1027 / KCTC 2358 / NCIMB 9240 / NCTC 8049</strain>
    </source>
</reference>
<feature type="signal peptide" evidence="1">
    <location>
        <begin position="1"/>
        <end position="21"/>
    </location>
</feature>
<feature type="chain" id="PRO_1000050104" description="Flagellar P-ring protein">
    <location>
        <begin position="22"/>
        <end position="365"/>
    </location>
</feature>
<evidence type="ECO:0000255" key="1">
    <source>
        <dbReference type="HAMAP-Rule" id="MF_00416"/>
    </source>
</evidence>
<protein>
    <recommendedName>
        <fullName evidence="1">Flagellar P-ring protein</fullName>
    </recommendedName>
    <alternativeName>
        <fullName evidence="1">Basal body P-ring protein</fullName>
    </alternativeName>
</protein>
<name>FLGI_AERHH</name>
<organism>
    <name type="scientific">Aeromonas hydrophila subsp. hydrophila (strain ATCC 7966 / DSM 30187 / BCRC 13018 / CCUG 14551 / JCM 1027 / KCTC 2358 / NCIMB 9240 / NCTC 8049)</name>
    <dbReference type="NCBI Taxonomy" id="380703"/>
    <lineage>
        <taxon>Bacteria</taxon>
        <taxon>Pseudomonadati</taxon>
        <taxon>Pseudomonadota</taxon>
        <taxon>Gammaproteobacteria</taxon>
        <taxon>Aeromonadales</taxon>
        <taxon>Aeromonadaceae</taxon>
        <taxon>Aeromonas</taxon>
    </lineage>
</organism>
<dbReference type="EMBL" id="CP000462">
    <property type="protein sequence ID" value="ABK38148.1"/>
    <property type="molecule type" value="Genomic_DNA"/>
</dbReference>
<dbReference type="RefSeq" id="WP_011706637.1">
    <property type="nucleotide sequence ID" value="NC_008570.1"/>
</dbReference>
<dbReference type="RefSeq" id="YP_857339.1">
    <property type="nucleotide sequence ID" value="NC_008570.1"/>
</dbReference>
<dbReference type="SMR" id="A0KM38"/>
<dbReference type="STRING" id="380703.AHA_2835"/>
<dbReference type="EnsemblBacteria" id="ABK38148">
    <property type="protein sequence ID" value="ABK38148"/>
    <property type="gene ID" value="AHA_2835"/>
</dbReference>
<dbReference type="GeneID" id="4489818"/>
<dbReference type="KEGG" id="aha:AHA_2835"/>
<dbReference type="PATRIC" id="fig|380703.7.peg.2845"/>
<dbReference type="eggNOG" id="COG1706">
    <property type="taxonomic scope" value="Bacteria"/>
</dbReference>
<dbReference type="HOGENOM" id="CLU_045235_1_0_6"/>
<dbReference type="OrthoDB" id="9786431at2"/>
<dbReference type="Proteomes" id="UP000000756">
    <property type="component" value="Chromosome"/>
</dbReference>
<dbReference type="GO" id="GO:0009428">
    <property type="term" value="C:bacterial-type flagellum basal body, distal rod, P ring"/>
    <property type="evidence" value="ECO:0007669"/>
    <property type="project" value="InterPro"/>
</dbReference>
<dbReference type="GO" id="GO:0030288">
    <property type="term" value="C:outer membrane-bounded periplasmic space"/>
    <property type="evidence" value="ECO:0007669"/>
    <property type="project" value="InterPro"/>
</dbReference>
<dbReference type="GO" id="GO:0005198">
    <property type="term" value="F:structural molecule activity"/>
    <property type="evidence" value="ECO:0007669"/>
    <property type="project" value="InterPro"/>
</dbReference>
<dbReference type="GO" id="GO:0071973">
    <property type="term" value="P:bacterial-type flagellum-dependent cell motility"/>
    <property type="evidence" value="ECO:0007669"/>
    <property type="project" value="InterPro"/>
</dbReference>
<dbReference type="HAMAP" id="MF_00416">
    <property type="entry name" value="FlgI"/>
    <property type="match status" value="1"/>
</dbReference>
<dbReference type="InterPro" id="IPR001782">
    <property type="entry name" value="Flag_FlgI"/>
</dbReference>
<dbReference type="NCBIfam" id="NF003676">
    <property type="entry name" value="PRK05303.1"/>
    <property type="match status" value="1"/>
</dbReference>
<dbReference type="PANTHER" id="PTHR30381">
    <property type="entry name" value="FLAGELLAR P-RING PERIPLASMIC PROTEIN FLGI"/>
    <property type="match status" value="1"/>
</dbReference>
<dbReference type="PANTHER" id="PTHR30381:SF0">
    <property type="entry name" value="FLAGELLAR P-RING PROTEIN"/>
    <property type="match status" value="1"/>
</dbReference>
<dbReference type="Pfam" id="PF02119">
    <property type="entry name" value="FlgI"/>
    <property type="match status" value="1"/>
</dbReference>
<dbReference type="PRINTS" id="PR01010">
    <property type="entry name" value="FLGPRINGFLGI"/>
</dbReference>
<accession>A0KM38</accession>
<proteinExistence type="inferred from homology"/>